<organism>
    <name type="scientific">Shewanella denitrificans (strain OS217 / ATCC BAA-1090 / DSM 15013)</name>
    <dbReference type="NCBI Taxonomy" id="318161"/>
    <lineage>
        <taxon>Bacteria</taxon>
        <taxon>Pseudomonadati</taxon>
        <taxon>Pseudomonadota</taxon>
        <taxon>Gammaproteobacteria</taxon>
        <taxon>Alteromonadales</taxon>
        <taxon>Shewanellaceae</taxon>
        <taxon>Shewanella</taxon>
    </lineage>
</organism>
<protein>
    <recommendedName>
        <fullName evidence="1">Large ribosomal subunit protein bL9</fullName>
    </recommendedName>
    <alternativeName>
        <fullName evidence="2">50S ribosomal protein L9</fullName>
    </alternativeName>
</protein>
<name>RL9_SHEDO</name>
<sequence>MNVILLDKIANLGSLGDQVSVKAGYARNFLLPFGKAVVANAANVEVFEARRAELEAKLAAELATATARAEKLAALEAVVIASKAGDEGKLFGSIGNRDIADAVTAAGVELAKSEVRLPLGALRTTGNFEVEVQVHTEVKAVVKVTVVAEA</sequence>
<dbReference type="EMBL" id="CP000302">
    <property type="protein sequence ID" value="ABE53810.1"/>
    <property type="molecule type" value="Genomic_DNA"/>
</dbReference>
<dbReference type="RefSeq" id="WP_011494976.1">
    <property type="nucleotide sequence ID" value="NC_007954.1"/>
</dbReference>
<dbReference type="SMR" id="Q12RW6"/>
<dbReference type="STRING" id="318161.Sden_0518"/>
<dbReference type="KEGG" id="sdn:Sden_0518"/>
<dbReference type="eggNOG" id="COG0359">
    <property type="taxonomic scope" value="Bacteria"/>
</dbReference>
<dbReference type="HOGENOM" id="CLU_078938_4_1_6"/>
<dbReference type="OrthoDB" id="9788336at2"/>
<dbReference type="Proteomes" id="UP000001982">
    <property type="component" value="Chromosome"/>
</dbReference>
<dbReference type="GO" id="GO:1990904">
    <property type="term" value="C:ribonucleoprotein complex"/>
    <property type="evidence" value="ECO:0007669"/>
    <property type="project" value="UniProtKB-KW"/>
</dbReference>
<dbReference type="GO" id="GO:0005840">
    <property type="term" value="C:ribosome"/>
    <property type="evidence" value="ECO:0007669"/>
    <property type="project" value="UniProtKB-KW"/>
</dbReference>
<dbReference type="GO" id="GO:0019843">
    <property type="term" value="F:rRNA binding"/>
    <property type="evidence" value="ECO:0007669"/>
    <property type="project" value="UniProtKB-UniRule"/>
</dbReference>
<dbReference type="GO" id="GO:0003735">
    <property type="term" value="F:structural constituent of ribosome"/>
    <property type="evidence" value="ECO:0007669"/>
    <property type="project" value="InterPro"/>
</dbReference>
<dbReference type="GO" id="GO:0006412">
    <property type="term" value="P:translation"/>
    <property type="evidence" value="ECO:0007669"/>
    <property type="project" value="UniProtKB-UniRule"/>
</dbReference>
<dbReference type="FunFam" id="3.10.430.100:FF:000001">
    <property type="entry name" value="50S ribosomal protein L9"/>
    <property type="match status" value="1"/>
</dbReference>
<dbReference type="FunFam" id="3.40.5.10:FF:000001">
    <property type="entry name" value="50S ribosomal protein L9"/>
    <property type="match status" value="1"/>
</dbReference>
<dbReference type="Gene3D" id="3.10.430.100">
    <property type="entry name" value="Ribosomal protein L9, C-terminal domain"/>
    <property type="match status" value="1"/>
</dbReference>
<dbReference type="Gene3D" id="3.40.5.10">
    <property type="entry name" value="Ribosomal protein L9, N-terminal domain"/>
    <property type="match status" value="1"/>
</dbReference>
<dbReference type="HAMAP" id="MF_00503">
    <property type="entry name" value="Ribosomal_bL9"/>
    <property type="match status" value="1"/>
</dbReference>
<dbReference type="InterPro" id="IPR000244">
    <property type="entry name" value="Ribosomal_bL9"/>
</dbReference>
<dbReference type="InterPro" id="IPR009027">
    <property type="entry name" value="Ribosomal_bL9/RNase_H1_N"/>
</dbReference>
<dbReference type="InterPro" id="IPR020594">
    <property type="entry name" value="Ribosomal_bL9_bac/chp"/>
</dbReference>
<dbReference type="InterPro" id="IPR020069">
    <property type="entry name" value="Ribosomal_bL9_C"/>
</dbReference>
<dbReference type="InterPro" id="IPR036791">
    <property type="entry name" value="Ribosomal_bL9_C_sf"/>
</dbReference>
<dbReference type="InterPro" id="IPR020070">
    <property type="entry name" value="Ribosomal_bL9_N"/>
</dbReference>
<dbReference type="InterPro" id="IPR036935">
    <property type="entry name" value="Ribosomal_bL9_N_sf"/>
</dbReference>
<dbReference type="NCBIfam" id="TIGR00158">
    <property type="entry name" value="L9"/>
    <property type="match status" value="1"/>
</dbReference>
<dbReference type="PANTHER" id="PTHR21368">
    <property type="entry name" value="50S RIBOSOMAL PROTEIN L9"/>
    <property type="match status" value="1"/>
</dbReference>
<dbReference type="Pfam" id="PF03948">
    <property type="entry name" value="Ribosomal_L9_C"/>
    <property type="match status" value="1"/>
</dbReference>
<dbReference type="Pfam" id="PF01281">
    <property type="entry name" value="Ribosomal_L9_N"/>
    <property type="match status" value="1"/>
</dbReference>
<dbReference type="SUPFAM" id="SSF55658">
    <property type="entry name" value="L9 N-domain-like"/>
    <property type="match status" value="1"/>
</dbReference>
<dbReference type="SUPFAM" id="SSF55653">
    <property type="entry name" value="Ribosomal protein L9 C-domain"/>
    <property type="match status" value="1"/>
</dbReference>
<dbReference type="PROSITE" id="PS00651">
    <property type="entry name" value="RIBOSOMAL_L9"/>
    <property type="match status" value="1"/>
</dbReference>
<keyword id="KW-1185">Reference proteome</keyword>
<keyword id="KW-0687">Ribonucleoprotein</keyword>
<keyword id="KW-0689">Ribosomal protein</keyword>
<keyword id="KW-0694">RNA-binding</keyword>
<keyword id="KW-0699">rRNA-binding</keyword>
<accession>Q12RW6</accession>
<evidence type="ECO:0000255" key="1">
    <source>
        <dbReference type="HAMAP-Rule" id="MF_00503"/>
    </source>
</evidence>
<evidence type="ECO:0000305" key="2"/>
<comment type="function">
    <text evidence="1">Binds to the 23S rRNA.</text>
</comment>
<comment type="similarity">
    <text evidence="1">Belongs to the bacterial ribosomal protein bL9 family.</text>
</comment>
<proteinExistence type="inferred from homology"/>
<reference key="1">
    <citation type="submission" date="2006-03" db="EMBL/GenBank/DDBJ databases">
        <title>Complete sequence of Shewanella denitrificans OS217.</title>
        <authorList>
            <consortium name="US DOE Joint Genome Institute"/>
            <person name="Copeland A."/>
            <person name="Lucas S."/>
            <person name="Lapidus A."/>
            <person name="Barry K."/>
            <person name="Detter J.C."/>
            <person name="Glavina del Rio T."/>
            <person name="Hammon N."/>
            <person name="Israni S."/>
            <person name="Dalin E."/>
            <person name="Tice H."/>
            <person name="Pitluck S."/>
            <person name="Brettin T."/>
            <person name="Bruce D."/>
            <person name="Han C."/>
            <person name="Tapia R."/>
            <person name="Gilna P."/>
            <person name="Kiss H."/>
            <person name="Schmutz J."/>
            <person name="Larimer F."/>
            <person name="Land M."/>
            <person name="Hauser L."/>
            <person name="Kyrpides N."/>
            <person name="Lykidis A."/>
            <person name="Richardson P."/>
        </authorList>
    </citation>
    <scope>NUCLEOTIDE SEQUENCE [LARGE SCALE GENOMIC DNA]</scope>
    <source>
        <strain>OS217 / ATCC BAA-1090 / DSM 15013</strain>
    </source>
</reference>
<gene>
    <name evidence="1" type="primary">rplI</name>
    <name type="ordered locus">Sden_0518</name>
</gene>
<feature type="chain" id="PRO_1000014857" description="Large ribosomal subunit protein bL9">
    <location>
        <begin position="1"/>
        <end position="150"/>
    </location>
</feature>